<sequence>MVERVYYKDPYLREIDAKIVDVRKEKDRVEVVLDRTIFYPEGGGQPGDRGVIKGNDFEIMVEDTIEKNGEIFHIGKLRGEIPKEGEKVKLYLDWEWRYGNMQMHTGQHILSAVLKKLYDLDTTGFNIFRDYAKIEVNGEVNWDMIERAELEVNKIIINDLPVVIEEYDKLPEEIALKLRKNVTKVKEKIRIVKIGDVDVTPCGGTHVKSTREVGIIKVLRFYKKSKNLWRIEFTCGYRAISKMNEILRDYWGSLDLMPNKNPPLIERINEVLRTVNSLENRIEELRREIWEWKGKALLKEGVKVGNYTVITHVENWNMKDAQAFAIDFVKKNSNTILLLANEKYVLFAKNEGVPVSMRELLKEVIDELGGKGGGTDNLARGRVEAKPEEIFDVALEKLRSHLQV</sequence>
<organism>
    <name type="scientific">Pyrococcus horikoshii (strain ATCC 700860 / DSM 12428 / JCM 9974 / NBRC 100139 / OT-3)</name>
    <dbReference type="NCBI Taxonomy" id="70601"/>
    <lineage>
        <taxon>Archaea</taxon>
        <taxon>Methanobacteriati</taxon>
        <taxon>Methanobacteriota</taxon>
        <taxon>Thermococci</taxon>
        <taxon>Thermococcales</taxon>
        <taxon>Thermococcaceae</taxon>
        <taxon>Pyrococcus</taxon>
    </lineage>
</organism>
<accession>O57734</accession>
<evidence type="ECO:0000250" key="1"/>
<evidence type="ECO:0000305" key="2"/>
<keyword id="KW-0963">Cytoplasm</keyword>
<keyword id="KW-0479">Metal-binding</keyword>
<keyword id="KW-0862">Zinc</keyword>
<proteinExistence type="inferred from homology"/>
<comment type="function">
    <text evidence="1">Functions in trans to edit the amino acid moiety from mischarged charged tRNA(Ala).</text>
</comment>
<comment type="cofactor">
    <cofactor evidence="1">
        <name>Zn(2+)</name>
        <dbReference type="ChEBI" id="CHEBI:29105"/>
    </cofactor>
    <text evidence="1">Binds 1 zinc ion per subunit.</text>
</comment>
<comment type="subcellular location">
    <subcellularLocation>
        <location evidence="2">Cytoplasm</location>
    </subcellularLocation>
</comment>
<comment type="similarity">
    <text evidence="2">Belongs to the class-II aminoacyl-tRNA synthetase family. Editing domain AlaX-L subfamily.</text>
</comment>
<gene>
    <name type="primary">alaXL</name>
    <name type="ordered locus">PH1969</name>
</gene>
<dbReference type="EMBL" id="BA000001">
    <property type="protein sequence ID" value="BAA31096.1"/>
    <property type="molecule type" value="Genomic_DNA"/>
</dbReference>
<dbReference type="PIR" id="A71213">
    <property type="entry name" value="A71213"/>
</dbReference>
<dbReference type="RefSeq" id="WP_010886033.1">
    <property type="nucleotide sequence ID" value="NC_000961.1"/>
</dbReference>
<dbReference type="SMR" id="O57734"/>
<dbReference type="STRING" id="70601.gene:9378982"/>
<dbReference type="EnsemblBacteria" id="BAA31096">
    <property type="protein sequence ID" value="BAA31096"/>
    <property type="gene ID" value="BAA31096"/>
</dbReference>
<dbReference type="GeneID" id="1442815"/>
<dbReference type="KEGG" id="pho:PH1969"/>
<dbReference type="eggNOG" id="arCOG01254">
    <property type="taxonomic scope" value="Archaea"/>
</dbReference>
<dbReference type="OrthoDB" id="11392at2157"/>
<dbReference type="Proteomes" id="UP000000752">
    <property type="component" value="Chromosome"/>
</dbReference>
<dbReference type="GO" id="GO:0005737">
    <property type="term" value="C:cytoplasm"/>
    <property type="evidence" value="ECO:0007669"/>
    <property type="project" value="UniProtKB-SubCell"/>
</dbReference>
<dbReference type="GO" id="GO:0004813">
    <property type="term" value="F:alanine-tRNA ligase activity"/>
    <property type="evidence" value="ECO:0007669"/>
    <property type="project" value="InterPro"/>
</dbReference>
<dbReference type="GO" id="GO:0002161">
    <property type="term" value="F:aminoacyl-tRNA deacylase activity"/>
    <property type="evidence" value="ECO:0007669"/>
    <property type="project" value="UniProtKB-ARBA"/>
</dbReference>
<dbReference type="GO" id="GO:0005524">
    <property type="term" value="F:ATP binding"/>
    <property type="evidence" value="ECO:0007669"/>
    <property type="project" value="InterPro"/>
</dbReference>
<dbReference type="GO" id="GO:0046872">
    <property type="term" value="F:metal ion binding"/>
    <property type="evidence" value="ECO:0007669"/>
    <property type="project" value="UniProtKB-KW"/>
</dbReference>
<dbReference type="GO" id="GO:0003676">
    <property type="term" value="F:nucleic acid binding"/>
    <property type="evidence" value="ECO:0007669"/>
    <property type="project" value="InterPro"/>
</dbReference>
<dbReference type="GO" id="GO:0006419">
    <property type="term" value="P:alanyl-tRNA aminoacylation"/>
    <property type="evidence" value="ECO:0007669"/>
    <property type="project" value="InterPro"/>
</dbReference>
<dbReference type="Gene3D" id="2.40.30.130">
    <property type="match status" value="1"/>
</dbReference>
<dbReference type="Gene3D" id="3.10.310.40">
    <property type="match status" value="1"/>
</dbReference>
<dbReference type="Gene3D" id="3.30.980.10">
    <property type="entry name" value="Threonyl-trna Synthetase, Chain A, domain 2"/>
    <property type="match status" value="1"/>
</dbReference>
<dbReference type="InterPro" id="IPR018165">
    <property type="entry name" value="Ala-tRNA-synth_IIc_core"/>
</dbReference>
<dbReference type="InterPro" id="IPR018164">
    <property type="entry name" value="Ala-tRNA-synth_IIc_N"/>
</dbReference>
<dbReference type="InterPro" id="IPR051335">
    <property type="entry name" value="Alanyl-tRNA_Editing_Enzymes"/>
</dbReference>
<dbReference type="InterPro" id="IPR003156">
    <property type="entry name" value="DHHA1_dom"/>
</dbReference>
<dbReference type="InterPro" id="IPR018163">
    <property type="entry name" value="Thr/Ala-tRNA-synth_IIc_edit"/>
</dbReference>
<dbReference type="InterPro" id="IPR009000">
    <property type="entry name" value="Transl_B-barrel_sf"/>
</dbReference>
<dbReference type="InterPro" id="IPR012947">
    <property type="entry name" value="tRNA_SAD"/>
</dbReference>
<dbReference type="PANTHER" id="PTHR43462">
    <property type="entry name" value="ALANYL-TRNA EDITING PROTEIN"/>
    <property type="match status" value="1"/>
</dbReference>
<dbReference type="PANTHER" id="PTHR43462:SF1">
    <property type="entry name" value="ALANYL-TRNA EDITING PROTEIN AARSD1"/>
    <property type="match status" value="1"/>
</dbReference>
<dbReference type="Pfam" id="PF02272">
    <property type="entry name" value="DHHA1"/>
    <property type="match status" value="1"/>
</dbReference>
<dbReference type="Pfam" id="PF01411">
    <property type="entry name" value="tRNA-synt_2c"/>
    <property type="match status" value="1"/>
</dbReference>
<dbReference type="Pfam" id="PF07973">
    <property type="entry name" value="tRNA_SAD"/>
    <property type="match status" value="1"/>
</dbReference>
<dbReference type="SMART" id="SM00863">
    <property type="entry name" value="tRNA_SAD"/>
    <property type="match status" value="1"/>
</dbReference>
<dbReference type="SUPFAM" id="SSF55186">
    <property type="entry name" value="ThrRS/AlaRS common domain"/>
    <property type="match status" value="1"/>
</dbReference>
<dbReference type="SUPFAM" id="SSF50447">
    <property type="entry name" value="Translation proteins"/>
    <property type="match status" value="1"/>
</dbReference>
<dbReference type="PROSITE" id="PS50860">
    <property type="entry name" value="AA_TRNA_LIGASE_II_ALA"/>
    <property type="match status" value="1"/>
</dbReference>
<reference key="1">
    <citation type="journal article" date="1998" name="DNA Res.">
        <title>Complete sequence and gene organization of the genome of a hyper-thermophilic archaebacterium, Pyrococcus horikoshii OT3.</title>
        <authorList>
            <person name="Kawarabayasi Y."/>
            <person name="Sawada M."/>
            <person name="Horikawa H."/>
            <person name="Haikawa Y."/>
            <person name="Hino Y."/>
            <person name="Yamamoto S."/>
            <person name="Sekine M."/>
            <person name="Baba S."/>
            <person name="Kosugi H."/>
            <person name="Hosoyama A."/>
            <person name="Nagai Y."/>
            <person name="Sakai M."/>
            <person name="Ogura K."/>
            <person name="Otsuka R."/>
            <person name="Nakazawa H."/>
            <person name="Takamiya M."/>
            <person name="Ohfuku Y."/>
            <person name="Funahashi T."/>
            <person name="Tanaka T."/>
            <person name="Kudoh Y."/>
            <person name="Yamazaki J."/>
            <person name="Kushida N."/>
            <person name="Oguchi A."/>
            <person name="Aoki K."/>
            <person name="Yoshizawa T."/>
            <person name="Nakamura Y."/>
            <person name="Robb F.T."/>
            <person name="Horikoshi K."/>
            <person name="Masuchi Y."/>
            <person name="Shizuya H."/>
            <person name="Kikuchi H."/>
        </authorList>
    </citation>
    <scope>NUCLEOTIDE SEQUENCE [LARGE SCALE GENOMIC DNA]</scope>
    <source>
        <strain>ATCC 700860 / DSM 12428 / JCM 9974 / NBRC 100139 / OT-3</strain>
    </source>
</reference>
<protein>
    <recommendedName>
        <fullName>Alanyl-tRNA editing protein AlaX-L</fullName>
        <shortName>AlaX-L</shortName>
    </recommendedName>
    <alternativeName>
        <fullName>Alanyl-tRNA deacylase AlaX-L</fullName>
    </alternativeName>
</protein>
<name>ALAXL_PYRHO</name>
<feature type="chain" id="PRO_0000391650" description="Alanyl-tRNA editing protein AlaX-L">
    <location>
        <begin position="1"/>
        <end position="404"/>
    </location>
</feature>
<feature type="binding site" evidence="1">
    <location>
        <position position="104"/>
    </location>
    <ligand>
        <name>Zn(2+)</name>
        <dbReference type="ChEBI" id="CHEBI:29105"/>
    </ligand>
</feature>
<feature type="binding site" evidence="1">
    <location>
        <position position="108"/>
    </location>
    <ligand>
        <name>Zn(2+)</name>
        <dbReference type="ChEBI" id="CHEBI:29105"/>
    </ligand>
</feature>
<feature type="binding site" evidence="1">
    <location>
        <position position="202"/>
    </location>
    <ligand>
        <name>Zn(2+)</name>
        <dbReference type="ChEBI" id="CHEBI:29105"/>
    </ligand>
</feature>
<feature type="binding site" evidence="1">
    <location>
        <position position="206"/>
    </location>
    <ligand>
        <name>Zn(2+)</name>
        <dbReference type="ChEBI" id="CHEBI:29105"/>
    </ligand>
</feature>